<protein>
    <recommendedName>
        <fullName>14-3-3-like protein B</fullName>
    </recommendedName>
    <alternativeName>
        <fullName>SGF14B</fullName>
    </alternativeName>
</protein>
<evidence type="ECO:0000305" key="1"/>
<proteinExistence type="evidence at transcript level"/>
<feature type="chain" id="PRO_0000058702" description="14-3-3-like protein B">
    <location>
        <begin position="1" status="less than"/>
        <end position="247"/>
    </location>
</feature>
<feature type="non-terminal residue">
    <location>
        <position position="1"/>
    </location>
</feature>
<accession>Q96451</accession>
<sequence length="247" mass="27921">AEGLNREQYVYLANVSEQAERYEEMVEFMQKVVVGSTPASELTVEERNLLSVAYKNVIGSLRAAWRIVSSIEQKEEGRKNDDHVSLVKHYRSKVENELTQVCATILSLLDSNLVPSASASESKVFYLKMKGDYHRYLAEFKVGDERKTATEDTMLSYKAAQDIASADLPPTHPIRLGLALNFSVFYYEILNQSDKACAMAKQAFEEAIAELDTLGEESYKDSTLIMQLLRDNLTLWTSDVQDQLDEP</sequence>
<organism>
    <name type="scientific">Glycine max</name>
    <name type="common">Soybean</name>
    <name type="synonym">Glycine hispida</name>
    <dbReference type="NCBI Taxonomy" id="3847"/>
    <lineage>
        <taxon>Eukaryota</taxon>
        <taxon>Viridiplantae</taxon>
        <taxon>Streptophyta</taxon>
        <taxon>Embryophyta</taxon>
        <taxon>Tracheophyta</taxon>
        <taxon>Spermatophyta</taxon>
        <taxon>Magnoliopsida</taxon>
        <taxon>eudicotyledons</taxon>
        <taxon>Gunneridae</taxon>
        <taxon>Pentapetalae</taxon>
        <taxon>rosids</taxon>
        <taxon>fabids</taxon>
        <taxon>Fabales</taxon>
        <taxon>Fabaceae</taxon>
        <taxon>Papilionoideae</taxon>
        <taxon>50 kb inversion clade</taxon>
        <taxon>NPAAA clade</taxon>
        <taxon>indigoferoid/millettioid clade</taxon>
        <taxon>Phaseoleae</taxon>
        <taxon>Glycine</taxon>
        <taxon>Glycine subgen. Soja</taxon>
    </lineage>
</organism>
<keyword id="KW-1185">Reference proteome</keyword>
<dbReference type="EMBL" id="U70534">
    <property type="protein sequence ID" value="AAB09581.1"/>
    <property type="molecule type" value="mRNA"/>
</dbReference>
<dbReference type="PIR" id="T08842">
    <property type="entry name" value="T08842"/>
</dbReference>
<dbReference type="SMR" id="Q96451"/>
<dbReference type="FunCoup" id="Q96451">
    <property type="interactions" value="5311"/>
</dbReference>
<dbReference type="STRING" id="3847.Q96451"/>
<dbReference type="PaxDb" id="3847-GLYMA04G09820.1"/>
<dbReference type="eggNOG" id="KOG0841">
    <property type="taxonomic scope" value="Eukaryota"/>
</dbReference>
<dbReference type="HOGENOM" id="CLU_058290_0_0_1"/>
<dbReference type="InParanoid" id="Q96451"/>
<dbReference type="Proteomes" id="UP000008827">
    <property type="component" value="Unplaced"/>
</dbReference>
<dbReference type="GO" id="GO:0005737">
    <property type="term" value="C:cytoplasm"/>
    <property type="evidence" value="ECO:0000318"/>
    <property type="project" value="GO_Central"/>
</dbReference>
<dbReference type="GO" id="GO:0008104">
    <property type="term" value="P:protein localization"/>
    <property type="evidence" value="ECO:0000318"/>
    <property type="project" value="GO_Central"/>
</dbReference>
<dbReference type="GO" id="GO:0007165">
    <property type="term" value="P:signal transduction"/>
    <property type="evidence" value="ECO:0000318"/>
    <property type="project" value="GO_Central"/>
</dbReference>
<dbReference type="FunFam" id="1.20.190.20:FF:000002">
    <property type="entry name" value="14-3-3 protein epsilon"/>
    <property type="match status" value="1"/>
</dbReference>
<dbReference type="Gene3D" id="1.20.190.20">
    <property type="entry name" value="14-3-3 domain"/>
    <property type="match status" value="1"/>
</dbReference>
<dbReference type="InterPro" id="IPR000308">
    <property type="entry name" value="14-3-3"/>
</dbReference>
<dbReference type="InterPro" id="IPR023409">
    <property type="entry name" value="14-3-3_CS"/>
</dbReference>
<dbReference type="InterPro" id="IPR036815">
    <property type="entry name" value="14-3-3_dom_sf"/>
</dbReference>
<dbReference type="InterPro" id="IPR023410">
    <property type="entry name" value="14-3-3_domain"/>
</dbReference>
<dbReference type="PANTHER" id="PTHR18860">
    <property type="entry name" value="14-3-3 PROTEIN"/>
    <property type="match status" value="1"/>
</dbReference>
<dbReference type="Pfam" id="PF00244">
    <property type="entry name" value="14-3-3"/>
    <property type="match status" value="1"/>
</dbReference>
<dbReference type="PIRSF" id="PIRSF000868">
    <property type="entry name" value="14-3-3"/>
    <property type="match status" value="1"/>
</dbReference>
<dbReference type="PRINTS" id="PR00305">
    <property type="entry name" value="1433ZETA"/>
</dbReference>
<dbReference type="SMART" id="SM00101">
    <property type="entry name" value="14_3_3"/>
    <property type="match status" value="1"/>
</dbReference>
<dbReference type="SUPFAM" id="SSF48445">
    <property type="entry name" value="14-3-3 protein"/>
    <property type="match status" value="1"/>
</dbReference>
<dbReference type="PROSITE" id="PS00796">
    <property type="entry name" value="1433_1"/>
    <property type="match status" value="1"/>
</dbReference>
<dbReference type="PROSITE" id="PS00797">
    <property type="entry name" value="1433_2"/>
    <property type="match status" value="1"/>
</dbReference>
<gene>
    <name type="primary">GF14B</name>
</gene>
<comment type="similarity">
    <text evidence="1">Belongs to the 14-3-3 family.</text>
</comment>
<name>1433B_SOYBN</name>
<reference key="1">
    <citation type="submission" date="1996-09" db="EMBL/GenBank/DDBJ databases">
        <authorList>
            <person name="Ryu G.R."/>
            <person name="Yoo C.M."/>
            <person name="Jeong H.J."/>
            <person name="Hong J.C."/>
        </authorList>
    </citation>
    <scope>NUCLEOTIDE SEQUENCE [MRNA]</scope>
    <source>
        <strain>cv. Williams</strain>
    </source>
</reference>